<keyword id="KW-0903">Direct protein sequencing</keyword>
<keyword id="KW-1015">Disulfide bond</keyword>
<keyword id="KW-0646">Protease inhibitor</keyword>
<keyword id="KW-0964">Secreted</keyword>
<keyword id="KW-0722">Serine protease inhibitor</keyword>
<accession>Q9R645</accession>
<comment type="function">
    <text>Inhibitor of subtilisin BPN'.</text>
</comment>
<comment type="subunit">
    <text>Homodimer.</text>
</comment>
<comment type="subcellular location">
    <subcellularLocation>
        <location>Secreted</location>
    </subcellularLocation>
</comment>
<comment type="similarity">
    <text evidence="2">Belongs to the protease inhibitor I16 (SSI) family.</text>
</comment>
<name>SSI15_STRBI</name>
<reference key="1">
    <citation type="journal article" date="1995" name="J. Biochem.">
        <title>A subtilisin inhibitor produced by Streptomyces bikiniensis possesses a glutamine residue at reactive site P1.</title>
        <authorList>
            <person name="Terabe M."/>
            <person name="Kojima S."/>
            <person name="Taguchi S."/>
            <person name="Momose H."/>
            <person name="Miura K."/>
        </authorList>
    </citation>
    <scope>PROTEIN SEQUENCE</scope>
    <scope>CHARACTERIZATION</scope>
</reference>
<dbReference type="SMR" id="Q9R645"/>
<dbReference type="MEROPS" id="I16.016"/>
<dbReference type="GO" id="GO:0005576">
    <property type="term" value="C:extracellular region"/>
    <property type="evidence" value="ECO:0007669"/>
    <property type="project" value="UniProtKB-SubCell"/>
</dbReference>
<dbReference type="GO" id="GO:0004867">
    <property type="term" value="F:serine-type endopeptidase inhibitor activity"/>
    <property type="evidence" value="ECO:0007669"/>
    <property type="project" value="UniProtKB-UniRule"/>
</dbReference>
<dbReference type="Gene3D" id="3.30.350.10">
    <property type="entry name" value="Subtilisin inhibitor-like"/>
    <property type="match status" value="1"/>
</dbReference>
<dbReference type="HAMAP" id="MF_00778">
    <property type="entry name" value="SSI"/>
    <property type="match status" value="1"/>
</dbReference>
<dbReference type="InterPro" id="IPR000691">
    <property type="entry name" value="Prot_inh_I16_SSI"/>
</dbReference>
<dbReference type="InterPro" id="IPR020054">
    <property type="entry name" value="Prot_inh_SSI_I16_CS"/>
</dbReference>
<dbReference type="InterPro" id="IPR023549">
    <property type="entry name" value="Subtilisin_inhibitor"/>
</dbReference>
<dbReference type="InterPro" id="IPR036819">
    <property type="entry name" value="Subtilisin_inhibitor-like_sf"/>
</dbReference>
<dbReference type="Pfam" id="PF00720">
    <property type="entry name" value="SSI"/>
    <property type="match status" value="1"/>
</dbReference>
<dbReference type="PRINTS" id="PR00294">
    <property type="entry name" value="SSBTLNINHBTR"/>
</dbReference>
<dbReference type="SUPFAM" id="SSF55399">
    <property type="entry name" value="Subtilisin inhibitor"/>
    <property type="match status" value="1"/>
</dbReference>
<dbReference type="PROSITE" id="PS00999">
    <property type="entry name" value="SSI"/>
    <property type="match status" value="1"/>
</dbReference>
<proteinExistence type="evidence at protein level"/>
<evidence type="ECO:0000250" key="1"/>
<evidence type="ECO:0000305" key="2"/>
<protein>
    <recommendedName>
        <fullName>Subtilisin inhibitor-like protein 15</fullName>
        <shortName>SIL-15</shortName>
        <shortName>SIL15</shortName>
    </recommendedName>
</protein>
<feature type="chain" id="PRO_0000208657" description="Subtilisin inhibitor-like protein 15">
    <location>
        <begin position="1"/>
        <end position="113"/>
    </location>
</feature>
<feature type="site" description="Reactive bond" evidence="1">
    <location>
        <begin position="73"/>
        <end position="74"/>
    </location>
</feature>
<feature type="disulfide bond" evidence="1">
    <location>
        <begin position="31"/>
        <end position="46"/>
    </location>
</feature>
<feature type="disulfide bond" evidence="1">
    <location>
        <begin position="71"/>
        <end position="101"/>
    </location>
</feature>
<organism>
    <name type="scientific">Streptomyces bikiniensis</name>
    <dbReference type="NCBI Taxonomy" id="1896"/>
    <lineage>
        <taxon>Bacteria</taxon>
        <taxon>Bacillati</taxon>
        <taxon>Actinomycetota</taxon>
        <taxon>Actinomycetes</taxon>
        <taxon>Kitasatosporales</taxon>
        <taxon>Streptomycetaceae</taxon>
        <taxon>Streptomyces</taxon>
    </lineage>
</organism>
<sequence>SLYAPSAVVLSIGKGDASGPVTVLRATTLSCAPVPGGTHPAPEAACAELKAGFAGGGFGGLLASPDPDRACPQHFDPVTVTLDGVWEGARTSWQHTFSNACVMGTTLDGGEAF</sequence>